<keyword id="KW-0963">Cytoplasm</keyword>
<keyword id="KW-0326">Glycosidase</keyword>
<keyword id="KW-0378">Hydrolase</keyword>
<dbReference type="EC" id="3.2.1.28" evidence="1"/>
<dbReference type="EMBL" id="CP000946">
    <property type="protein sequence ID" value="ACA75879.1"/>
    <property type="molecule type" value="Genomic_DNA"/>
</dbReference>
<dbReference type="RefSeq" id="WP_000934218.1">
    <property type="nucleotide sequence ID" value="NZ_MTFT01000007.1"/>
</dbReference>
<dbReference type="SMR" id="B1J0B4"/>
<dbReference type="CAZy" id="GH37">
    <property type="family name" value="Glycoside Hydrolase Family 37"/>
</dbReference>
<dbReference type="KEGG" id="ecl:EcolC_0198"/>
<dbReference type="HOGENOM" id="CLU_006451_3_1_6"/>
<dbReference type="UniPathway" id="UPA00300">
    <property type="reaction ID" value="UER00535"/>
</dbReference>
<dbReference type="GO" id="GO:0005737">
    <property type="term" value="C:cytoplasm"/>
    <property type="evidence" value="ECO:0007669"/>
    <property type="project" value="UniProtKB-SubCell"/>
</dbReference>
<dbReference type="GO" id="GO:0004555">
    <property type="term" value="F:alpha,alpha-trehalase activity"/>
    <property type="evidence" value="ECO:0007669"/>
    <property type="project" value="UniProtKB-UniRule"/>
</dbReference>
<dbReference type="GO" id="GO:0071474">
    <property type="term" value="P:cellular hyperosmotic response"/>
    <property type="evidence" value="ECO:0007669"/>
    <property type="project" value="InterPro"/>
</dbReference>
<dbReference type="GO" id="GO:0005993">
    <property type="term" value="P:trehalose catabolic process"/>
    <property type="evidence" value="ECO:0007669"/>
    <property type="project" value="UniProtKB-UniRule"/>
</dbReference>
<dbReference type="FunFam" id="1.50.10.10:FF:000003">
    <property type="entry name" value="Cytoplasmic trehalase"/>
    <property type="match status" value="1"/>
</dbReference>
<dbReference type="Gene3D" id="1.50.10.10">
    <property type="match status" value="1"/>
</dbReference>
<dbReference type="HAMAP" id="MF_01059">
    <property type="entry name" value="Cyt_trehalase"/>
    <property type="match status" value="1"/>
</dbReference>
<dbReference type="InterPro" id="IPR008928">
    <property type="entry name" value="6-hairpin_glycosidase_sf"/>
</dbReference>
<dbReference type="InterPro" id="IPR012341">
    <property type="entry name" value="6hp_glycosidase-like_sf"/>
</dbReference>
<dbReference type="InterPro" id="IPR023715">
    <property type="entry name" value="Cyt_trehalase"/>
</dbReference>
<dbReference type="InterPro" id="IPR001661">
    <property type="entry name" value="Glyco_hydro_37"/>
</dbReference>
<dbReference type="InterPro" id="IPR018232">
    <property type="entry name" value="Glyco_hydro_37_CS"/>
</dbReference>
<dbReference type="NCBIfam" id="NF009773">
    <property type="entry name" value="PRK13270.1"/>
    <property type="match status" value="1"/>
</dbReference>
<dbReference type="NCBIfam" id="NF009774">
    <property type="entry name" value="PRK13271.1"/>
    <property type="match status" value="1"/>
</dbReference>
<dbReference type="PANTHER" id="PTHR23403:SF8">
    <property type="entry name" value="CYTOPLASMIC TREHALASE"/>
    <property type="match status" value="1"/>
</dbReference>
<dbReference type="PANTHER" id="PTHR23403">
    <property type="entry name" value="TREHALASE"/>
    <property type="match status" value="1"/>
</dbReference>
<dbReference type="Pfam" id="PF01204">
    <property type="entry name" value="Trehalase"/>
    <property type="match status" value="1"/>
</dbReference>
<dbReference type="PRINTS" id="PR00744">
    <property type="entry name" value="GLHYDRLASE37"/>
</dbReference>
<dbReference type="SUPFAM" id="SSF48208">
    <property type="entry name" value="Six-hairpin glycosidases"/>
    <property type="match status" value="1"/>
</dbReference>
<dbReference type="PROSITE" id="PS00927">
    <property type="entry name" value="TREHALASE_1"/>
    <property type="match status" value="1"/>
</dbReference>
<dbReference type="PROSITE" id="PS00928">
    <property type="entry name" value="TREHALASE_2"/>
    <property type="match status" value="1"/>
</dbReference>
<reference key="1">
    <citation type="submission" date="2008-02" db="EMBL/GenBank/DDBJ databases">
        <title>Complete sequence of Escherichia coli C str. ATCC 8739.</title>
        <authorList>
            <person name="Copeland A."/>
            <person name="Lucas S."/>
            <person name="Lapidus A."/>
            <person name="Glavina del Rio T."/>
            <person name="Dalin E."/>
            <person name="Tice H."/>
            <person name="Bruce D."/>
            <person name="Goodwin L."/>
            <person name="Pitluck S."/>
            <person name="Kiss H."/>
            <person name="Brettin T."/>
            <person name="Detter J.C."/>
            <person name="Han C."/>
            <person name="Kuske C.R."/>
            <person name="Schmutz J."/>
            <person name="Larimer F."/>
            <person name="Land M."/>
            <person name="Hauser L."/>
            <person name="Kyrpides N."/>
            <person name="Mikhailova N."/>
            <person name="Ingram L."/>
            <person name="Richardson P."/>
        </authorList>
    </citation>
    <scope>NUCLEOTIDE SEQUENCE [LARGE SCALE GENOMIC DNA]</scope>
    <source>
        <strain>ATCC 8739 / DSM 1576 / NBRC 3972 / NCIMB 8545 / WDCM 00012 / Crooks</strain>
    </source>
</reference>
<evidence type="ECO:0000255" key="1">
    <source>
        <dbReference type="HAMAP-Rule" id="MF_01059"/>
    </source>
</evidence>
<proteinExistence type="inferred from homology"/>
<name>TREF_ECOLC</name>
<comment type="function">
    <text evidence="1">Hydrolyzes trehalose to glucose. Could be involved, in cells returning to low osmolarity conditions, in the utilization of the accumulated cytoplasmic trehalose, which was synthesized in response to high osmolarity.</text>
</comment>
<comment type="catalytic activity">
    <reaction evidence="1">
        <text>alpha,alpha-trehalose + H2O = alpha-D-glucose + beta-D-glucose</text>
        <dbReference type="Rhea" id="RHEA:32675"/>
        <dbReference type="ChEBI" id="CHEBI:15377"/>
        <dbReference type="ChEBI" id="CHEBI:15903"/>
        <dbReference type="ChEBI" id="CHEBI:16551"/>
        <dbReference type="ChEBI" id="CHEBI:17925"/>
        <dbReference type="EC" id="3.2.1.28"/>
    </reaction>
</comment>
<comment type="pathway">
    <text evidence="1">Glycan degradation; trehalose degradation; D-glucose from alpha,alpha-trehalose: step 1/1.</text>
</comment>
<comment type="subunit">
    <text evidence="1">Monomer.</text>
</comment>
<comment type="subcellular location">
    <subcellularLocation>
        <location evidence="1">Cytoplasm</location>
    </subcellularLocation>
</comment>
<comment type="similarity">
    <text evidence="1">Belongs to the glycosyl hydrolase 37 family.</text>
</comment>
<sequence>MLNQKIQNPNPDELMIEVDLCYELDPYELKLDEMIEAEPEPEMIEGLPASDALTPADRYLELFEHVQSAKIFPDSKTFPDCAPKMDPLDILIRYRKVRRHRDFDLRKFVENHFWLPEVYSSEYVSDPQNSLKEHIDQLWPVLTREPQDHIPWSSLLALPQSYIVPGGRFSETYYWDSYFTMLGLAESGREDLLKCMADNFAWMIENYGHIPNGNRTYYLSRSQPPVFALMVELFEEDGVRGARRYLDHLKMEYAFWMDGAESLIPNQAYRHVVRMPDGSLLNRYWDDRDTPRDESWLEDVETAKHSGRPPNEVYRDLRAGAASGWDYSSRWLRDTGRLASIRTTQFIPIDLNAFLFKLESAIANISALKGEKETEALFRQKASARRDAVNRYLWDDENGIYRDYDWRREQLALFSAAAIVPLYVGMANHEQADRLANAVRSRLLTPGGILASEYETGEQWDKPNGWAPLQWMAIQGFKMYGDDLLGDEIARSWLKTVNQFYLEQHKMIEKYHIADGVPREGGGGEYPLQDGFGWTNGVVRRLIGLYGEP</sequence>
<organism>
    <name type="scientific">Escherichia coli (strain ATCC 8739 / DSM 1576 / NBRC 3972 / NCIMB 8545 / WDCM 00012 / Crooks)</name>
    <dbReference type="NCBI Taxonomy" id="481805"/>
    <lineage>
        <taxon>Bacteria</taxon>
        <taxon>Pseudomonadati</taxon>
        <taxon>Pseudomonadota</taxon>
        <taxon>Gammaproteobacteria</taxon>
        <taxon>Enterobacterales</taxon>
        <taxon>Enterobacteriaceae</taxon>
        <taxon>Escherichia</taxon>
    </lineage>
</organism>
<feature type="chain" id="PRO_1000084457" description="Cytoplasmic trehalase">
    <location>
        <begin position="1"/>
        <end position="549"/>
    </location>
</feature>
<feature type="active site" description="Proton donor/acceptor" evidence="1">
    <location>
        <position position="326"/>
    </location>
</feature>
<feature type="active site" description="Proton donor/acceptor" evidence="1">
    <location>
        <position position="509"/>
    </location>
</feature>
<feature type="binding site" evidence="1">
    <location>
        <position position="168"/>
    </location>
    <ligand>
        <name>substrate</name>
    </ligand>
</feature>
<feature type="binding site" evidence="1">
    <location>
        <begin position="175"/>
        <end position="176"/>
    </location>
    <ligand>
        <name>substrate</name>
    </ligand>
</feature>
<feature type="binding site" evidence="1">
    <location>
        <position position="212"/>
    </location>
    <ligand>
        <name>substrate</name>
    </ligand>
</feature>
<feature type="binding site" evidence="1">
    <location>
        <begin position="221"/>
        <end position="223"/>
    </location>
    <ligand>
        <name>substrate</name>
    </ligand>
</feature>
<feature type="binding site" evidence="1">
    <location>
        <begin position="292"/>
        <end position="294"/>
    </location>
    <ligand>
        <name>substrate</name>
    </ligand>
</feature>
<feature type="binding site" evidence="1">
    <location>
        <position position="324"/>
    </location>
    <ligand>
        <name>substrate</name>
    </ligand>
</feature>
<feature type="binding site" evidence="1">
    <location>
        <position position="525"/>
    </location>
    <ligand>
        <name>substrate</name>
    </ligand>
</feature>
<gene>
    <name evidence="1" type="primary">treF</name>
    <name type="ordered locus">EcolC_0198</name>
</gene>
<accession>B1J0B4</accession>
<protein>
    <recommendedName>
        <fullName evidence="1">Cytoplasmic trehalase</fullName>
        <ecNumber evidence="1">3.2.1.28</ecNumber>
    </recommendedName>
    <alternativeName>
        <fullName evidence="1">Alpha,alpha-trehalase</fullName>
    </alternativeName>
    <alternativeName>
        <fullName evidence="1">Alpha,alpha-trehalose glucohydrolase</fullName>
    </alternativeName>
</protein>